<organism>
    <name type="scientific">Rickettsia bellii (strain RML369-C)</name>
    <dbReference type="NCBI Taxonomy" id="336407"/>
    <lineage>
        <taxon>Bacteria</taxon>
        <taxon>Pseudomonadati</taxon>
        <taxon>Pseudomonadota</taxon>
        <taxon>Alphaproteobacteria</taxon>
        <taxon>Rickettsiales</taxon>
        <taxon>Rickettsiaceae</taxon>
        <taxon>Rickettsieae</taxon>
        <taxon>Rickettsia</taxon>
        <taxon>belli group</taxon>
    </lineage>
</organism>
<comment type="function">
    <text evidence="1">Is required not only for elongation of protein synthesis but also for the initiation of all mRNA translation through initiator tRNA(fMet) aminoacylation.</text>
</comment>
<comment type="catalytic activity">
    <reaction evidence="1">
        <text>tRNA(Met) + L-methionine + ATP = L-methionyl-tRNA(Met) + AMP + diphosphate</text>
        <dbReference type="Rhea" id="RHEA:13481"/>
        <dbReference type="Rhea" id="RHEA-COMP:9667"/>
        <dbReference type="Rhea" id="RHEA-COMP:9698"/>
        <dbReference type="ChEBI" id="CHEBI:30616"/>
        <dbReference type="ChEBI" id="CHEBI:33019"/>
        <dbReference type="ChEBI" id="CHEBI:57844"/>
        <dbReference type="ChEBI" id="CHEBI:78442"/>
        <dbReference type="ChEBI" id="CHEBI:78530"/>
        <dbReference type="ChEBI" id="CHEBI:456215"/>
        <dbReference type="EC" id="6.1.1.10"/>
    </reaction>
</comment>
<comment type="subunit">
    <text evidence="1">Monomer.</text>
</comment>
<comment type="subcellular location">
    <subcellularLocation>
        <location evidence="1">Cytoplasm</location>
    </subcellularLocation>
</comment>
<comment type="similarity">
    <text evidence="1">Belongs to the class-I aminoacyl-tRNA synthetase family. MetG type 2B subfamily.</text>
</comment>
<feature type="chain" id="PRO_0000272401" description="Methionine--tRNA ligase">
    <location>
        <begin position="1"/>
        <end position="509"/>
    </location>
</feature>
<feature type="short sequence motif" description="'HIGH' region">
    <location>
        <begin position="12"/>
        <end position="22"/>
    </location>
</feature>
<feature type="short sequence motif" description="'KMSKS' region">
    <location>
        <begin position="295"/>
        <end position="299"/>
    </location>
</feature>
<feature type="binding site" evidence="1">
    <location>
        <position position="298"/>
    </location>
    <ligand>
        <name>ATP</name>
        <dbReference type="ChEBI" id="CHEBI:30616"/>
    </ligand>
</feature>
<dbReference type="EC" id="6.1.1.10" evidence="1"/>
<dbReference type="EMBL" id="CP000087">
    <property type="protein sequence ID" value="ABE04319.1"/>
    <property type="molecule type" value="Genomic_DNA"/>
</dbReference>
<dbReference type="RefSeq" id="WP_011476932.1">
    <property type="nucleotide sequence ID" value="NC_007940.1"/>
</dbReference>
<dbReference type="SMR" id="Q1RJZ5"/>
<dbReference type="KEGG" id="rbe:RBE_0238"/>
<dbReference type="eggNOG" id="COG0143">
    <property type="taxonomic scope" value="Bacteria"/>
</dbReference>
<dbReference type="HOGENOM" id="CLU_009710_9_2_5"/>
<dbReference type="OrthoDB" id="9810191at2"/>
<dbReference type="Proteomes" id="UP000001951">
    <property type="component" value="Chromosome"/>
</dbReference>
<dbReference type="GO" id="GO:0005737">
    <property type="term" value="C:cytoplasm"/>
    <property type="evidence" value="ECO:0007669"/>
    <property type="project" value="UniProtKB-SubCell"/>
</dbReference>
<dbReference type="GO" id="GO:0005524">
    <property type="term" value="F:ATP binding"/>
    <property type="evidence" value="ECO:0007669"/>
    <property type="project" value="UniProtKB-UniRule"/>
</dbReference>
<dbReference type="GO" id="GO:0004825">
    <property type="term" value="F:methionine-tRNA ligase activity"/>
    <property type="evidence" value="ECO:0007669"/>
    <property type="project" value="UniProtKB-UniRule"/>
</dbReference>
<dbReference type="GO" id="GO:0006431">
    <property type="term" value="P:methionyl-tRNA aminoacylation"/>
    <property type="evidence" value="ECO:0007669"/>
    <property type="project" value="UniProtKB-UniRule"/>
</dbReference>
<dbReference type="CDD" id="cd07957">
    <property type="entry name" value="Anticodon_Ia_Met"/>
    <property type="match status" value="1"/>
</dbReference>
<dbReference type="CDD" id="cd00814">
    <property type="entry name" value="MetRS_core"/>
    <property type="match status" value="1"/>
</dbReference>
<dbReference type="FunFam" id="2.170.220.10:FF:000001">
    <property type="entry name" value="methionine--tRNA ligase, mitochondrial"/>
    <property type="match status" value="1"/>
</dbReference>
<dbReference type="Gene3D" id="2.170.220.10">
    <property type="match status" value="1"/>
</dbReference>
<dbReference type="Gene3D" id="3.40.50.620">
    <property type="entry name" value="HUPs"/>
    <property type="match status" value="1"/>
</dbReference>
<dbReference type="Gene3D" id="1.10.730.10">
    <property type="entry name" value="Isoleucyl-tRNA Synthetase, Domain 1"/>
    <property type="match status" value="1"/>
</dbReference>
<dbReference type="HAMAP" id="MF_01228">
    <property type="entry name" value="Met_tRNA_synth_type2"/>
    <property type="match status" value="1"/>
</dbReference>
<dbReference type="InterPro" id="IPR041872">
    <property type="entry name" value="Anticodon_Met"/>
</dbReference>
<dbReference type="InterPro" id="IPR014758">
    <property type="entry name" value="Met-tRNA_synth"/>
</dbReference>
<dbReference type="InterPro" id="IPR023457">
    <property type="entry name" value="Met-tRNA_synth_2"/>
</dbReference>
<dbReference type="InterPro" id="IPR015413">
    <property type="entry name" value="Methionyl/Leucyl_tRNA_Synth"/>
</dbReference>
<dbReference type="InterPro" id="IPR033911">
    <property type="entry name" value="MetRS_core"/>
</dbReference>
<dbReference type="InterPro" id="IPR014729">
    <property type="entry name" value="Rossmann-like_a/b/a_fold"/>
</dbReference>
<dbReference type="InterPro" id="IPR009080">
    <property type="entry name" value="tRNAsynth_Ia_anticodon-bd"/>
</dbReference>
<dbReference type="NCBIfam" id="TIGR00398">
    <property type="entry name" value="metG"/>
    <property type="match status" value="1"/>
</dbReference>
<dbReference type="NCBIfam" id="NF008900">
    <property type="entry name" value="PRK12267.1"/>
    <property type="match status" value="1"/>
</dbReference>
<dbReference type="PANTHER" id="PTHR43326:SF1">
    <property type="entry name" value="METHIONINE--TRNA LIGASE, MITOCHONDRIAL"/>
    <property type="match status" value="1"/>
</dbReference>
<dbReference type="PANTHER" id="PTHR43326">
    <property type="entry name" value="METHIONYL-TRNA SYNTHETASE"/>
    <property type="match status" value="1"/>
</dbReference>
<dbReference type="Pfam" id="PF19303">
    <property type="entry name" value="Anticodon_3"/>
    <property type="match status" value="1"/>
</dbReference>
<dbReference type="Pfam" id="PF09334">
    <property type="entry name" value="tRNA-synt_1g"/>
    <property type="match status" value="2"/>
</dbReference>
<dbReference type="PRINTS" id="PR01041">
    <property type="entry name" value="TRNASYNTHMET"/>
</dbReference>
<dbReference type="SUPFAM" id="SSF47323">
    <property type="entry name" value="Anticodon-binding domain of a subclass of class I aminoacyl-tRNA synthetases"/>
    <property type="match status" value="1"/>
</dbReference>
<dbReference type="SUPFAM" id="SSF52374">
    <property type="entry name" value="Nucleotidylyl transferase"/>
    <property type="match status" value="1"/>
</dbReference>
<sequence length="509" mass="58359">MNNTYYITTPIYYVNDVPHIGHAYTSVASDVIARFMRLSGHEVMFLTGTDEHGQKVEKAAIDKNIDPQKFTDQTSQSFRHLMTAMHISNDDFIRTTEERHKKAVAIFWQKLLDNGSIYEGFYEGWYAVRDEAFYDESELTADKLAPTGAAVEWVKEPSYFFNLSKWQDKLLEFYEANPDFIRPISRRNEVISFVKSGLKDLSVSRTTFNWGIKVPNDNKHVIYVWLDALANYISALGYPDQNSNYGKFWPANLQVVGKDILRFHAVYWPAFLMAAEIPLPKTIMAHGWWTNEGQKISKSLGNTIDPIKLIEEFGVDQVRYFLMREITFGADGNFARSNLITRINSELSNKIGNLLQRTTSFVYKNNDGKVPAITQDAINKIYELPLLKTAINSAKQNILLMEKTEINKILDNIINLAEEANIYIDSEAPWNLKKTDPEKMLEVLYALLETLRYIAVMLQAFMPSSAGKMLDQLGVNTEERLFKHLSLEFALTSASDILEPVIVFPRFEE</sequence>
<gene>
    <name evidence="1" type="primary">metG</name>
    <name type="ordered locus">RBE_0238</name>
</gene>
<accession>Q1RJZ5</accession>
<proteinExistence type="inferred from homology"/>
<keyword id="KW-0030">Aminoacyl-tRNA synthetase</keyword>
<keyword id="KW-0067">ATP-binding</keyword>
<keyword id="KW-0963">Cytoplasm</keyword>
<keyword id="KW-0436">Ligase</keyword>
<keyword id="KW-0547">Nucleotide-binding</keyword>
<keyword id="KW-0648">Protein biosynthesis</keyword>
<protein>
    <recommendedName>
        <fullName evidence="1">Methionine--tRNA ligase</fullName>
        <ecNumber evidence="1">6.1.1.10</ecNumber>
    </recommendedName>
    <alternativeName>
        <fullName evidence="1">Methionyl-tRNA synthetase</fullName>
        <shortName evidence="1">MetRS</shortName>
    </alternativeName>
</protein>
<name>SYM_RICBR</name>
<evidence type="ECO:0000255" key="1">
    <source>
        <dbReference type="HAMAP-Rule" id="MF_01228"/>
    </source>
</evidence>
<reference key="1">
    <citation type="journal article" date="2006" name="PLoS Genet.">
        <title>Genome sequence of Rickettsia bellii illuminates the role of amoebae in gene exchanges between intracellular pathogens.</title>
        <authorList>
            <person name="Ogata H."/>
            <person name="La Scola B."/>
            <person name="Audic S."/>
            <person name="Renesto P."/>
            <person name="Blanc G."/>
            <person name="Robert C."/>
            <person name="Fournier P.-E."/>
            <person name="Claverie J.-M."/>
            <person name="Raoult D."/>
        </authorList>
    </citation>
    <scope>NUCLEOTIDE SEQUENCE [LARGE SCALE GENOMIC DNA]</scope>
    <source>
        <strain>RML369-C</strain>
    </source>
</reference>